<organism>
    <name type="scientific">Dictyostelium discoideum</name>
    <name type="common">Social amoeba</name>
    <dbReference type="NCBI Taxonomy" id="44689"/>
    <lineage>
        <taxon>Eukaryota</taxon>
        <taxon>Amoebozoa</taxon>
        <taxon>Evosea</taxon>
        <taxon>Eumycetozoa</taxon>
        <taxon>Dictyostelia</taxon>
        <taxon>Dictyosteliales</taxon>
        <taxon>Dictyosteliaceae</taxon>
        <taxon>Dictyostelium</taxon>
    </lineage>
</organism>
<gene>
    <name type="primary">eloA</name>
    <name type="ORF">DDB_G0292896</name>
</gene>
<protein>
    <recommendedName>
        <fullName evidence="4">Fatty acid elongase A</fullName>
        <ecNumber>2.3.1.199</ecNumber>
    </recommendedName>
    <alternativeName>
        <fullName>3-keto acyl-CoA synthase eloA</fullName>
    </alternativeName>
    <alternativeName>
        <fullName>Elongation of fatty acids protein A</fullName>
    </alternativeName>
    <alternativeName>
        <fullName>Very-long-chain 3-oxoacyl-CoA synthase A</fullName>
    </alternativeName>
</protein>
<evidence type="ECO:0000255" key="1"/>
<evidence type="ECO:0000269" key="2">
    <source>
    </source>
</evidence>
<evidence type="ECO:0000269" key="3">
    <source>
    </source>
</evidence>
<evidence type="ECO:0000305" key="4"/>
<keyword id="KW-0275">Fatty acid biosynthesis</keyword>
<keyword id="KW-0276">Fatty acid metabolism</keyword>
<keyword id="KW-0444">Lipid biosynthesis</keyword>
<keyword id="KW-0443">Lipid metabolism</keyword>
<keyword id="KW-0472">Membrane</keyword>
<keyword id="KW-1185">Reference proteome</keyword>
<keyword id="KW-0808">Transferase</keyword>
<keyword id="KW-0812">Transmembrane</keyword>
<keyword id="KW-1133">Transmembrane helix</keyword>
<accession>Q54CJ4</accession>
<comment type="function">
    <text evidence="3">Fatty acid elongase with strict substrate specificity for monounsaturated fatty acids, in particular 16:1 (delta-9) to produce the unusual 18:1 (delta-11) fatty acid.</text>
</comment>
<comment type="catalytic activity">
    <reaction>
        <text>a very-long-chain acyl-CoA + malonyl-CoA + H(+) = a very-long-chain 3-oxoacyl-CoA + CO2 + CoA</text>
        <dbReference type="Rhea" id="RHEA:32727"/>
        <dbReference type="ChEBI" id="CHEBI:15378"/>
        <dbReference type="ChEBI" id="CHEBI:16526"/>
        <dbReference type="ChEBI" id="CHEBI:57287"/>
        <dbReference type="ChEBI" id="CHEBI:57384"/>
        <dbReference type="ChEBI" id="CHEBI:90725"/>
        <dbReference type="ChEBI" id="CHEBI:90736"/>
        <dbReference type="EC" id="2.3.1.199"/>
    </reaction>
</comment>
<comment type="subcellular location">
    <subcellularLocation>
        <location evidence="4">Membrane</location>
        <topology evidence="4">Multi-pass membrane protein</topology>
    </subcellularLocation>
</comment>
<comment type="induction">
    <text evidence="2">Down-regulated by Pseudomonas aeruginosa, PAO1 strain and PA14 strain infection.</text>
</comment>
<comment type="similarity">
    <text evidence="4">Belongs to the ELO family.</text>
</comment>
<sequence length="271" mass="32176">MEHIHDINFQEFSKDPIGTIDRFRWKNEVTPFSNILFPIVCSFGYLALIYGLQIFMKNKKEIKLHGFAMFHNLFLCLLSLLMFLGIVIPMAKYSFPHGLYNIICKPIDSGLVQFSYYIFYLSKVYEFIDTIIQVLRKKSLLFLHVWHHFITLWLVWANLKYDTGCQWVDISANCFVHIVMYFYYFQTERGINPWWKKHITTCQIIQFIVDMSSHLAWHFYDTQGNHNSNYCSGTWATSAFSDFVILSFLGLFIQFFVKAYKKKSSIKKKTN</sequence>
<proteinExistence type="evidence at transcript level"/>
<reference key="1">
    <citation type="journal article" date="2008" name="Biochem. Biophys. Res. Commun.">
        <title>A fatty acid elongase ELO with novel activity from Dictyostelium discoideum.</title>
        <authorList>
            <person name="Blacklock B.J."/>
            <person name="Kelley D."/>
            <person name="Patel S."/>
        </authorList>
    </citation>
    <scope>NUCLEOTIDE SEQUENCE [MRNA]</scope>
    <scope>FUNCTION</scope>
    <source>
        <strain>AX3</strain>
    </source>
</reference>
<reference key="2">
    <citation type="journal article" date="2005" name="Nature">
        <title>The genome of the social amoeba Dictyostelium discoideum.</title>
        <authorList>
            <person name="Eichinger L."/>
            <person name="Pachebat J.A."/>
            <person name="Gloeckner G."/>
            <person name="Rajandream M.A."/>
            <person name="Sucgang R."/>
            <person name="Berriman M."/>
            <person name="Song J."/>
            <person name="Olsen R."/>
            <person name="Szafranski K."/>
            <person name="Xu Q."/>
            <person name="Tunggal B."/>
            <person name="Kummerfeld S."/>
            <person name="Madera M."/>
            <person name="Konfortov B.A."/>
            <person name="Rivero F."/>
            <person name="Bankier A.T."/>
            <person name="Lehmann R."/>
            <person name="Hamlin N."/>
            <person name="Davies R."/>
            <person name="Gaudet P."/>
            <person name="Fey P."/>
            <person name="Pilcher K."/>
            <person name="Chen G."/>
            <person name="Saunders D."/>
            <person name="Sodergren E.J."/>
            <person name="Davis P."/>
            <person name="Kerhornou A."/>
            <person name="Nie X."/>
            <person name="Hall N."/>
            <person name="Anjard C."/>
            <person name="Hemphill L."/>
            <person name="Bason N."/>
            <person name="Farbrother P."/>
            <person name="Desany B."/>
            <person name="Just E."/>
            <person name="Morio T."/>
            <person name="Rost R."/>
            <person name="Churcher C.M."/>
            <person name="Cooper J."/>
            <person name="Haydock S."/>
            <person name="van Driessche N."/>
            <person name="Cronin A."/>
            <person name="Goodhead I."/>
            <person name="Muzny D.M."/>
            <person name="Mourier T."/>
            <person name="Pain A."/>
            <person name="Lu M."/>
            <person name="Harper D."/>
            <person name="Lindsay R."/>
            <person name="Hauser H."/>
            <person name="James K.D."/>
            <person name="Quiles M."/>
            <person name="Madan Babu M."/>
            <person name="Saito T."/>
            <person name="Buchrieser C."/>
            <person name="Wardroper A."/>
            <person name="Felder M."/>
            <person name="Thangavelu M."/>
            <person name="Johnson D."/>
            <person name="Knights A."/>
            <person name="Loulseged H."/>
            <person name="Mungall K.L."/>
            <person name="Oliver K."/>
            <person name="Price C."/>
            <person name="Quail M.A."/>
            <person name="Urushihara H."/>
            <person name="Hernandez J."/>
            <person name="Rabbinowitsch E."/>
            <person name="Steffen D."/>
            <person name="Sanders M."/>
            <person name="Ma J."/>
            <person name="Kohara Y."/>
            <person name="Sharp S."/>
            <person name="Simmonds M.N."/>
            <person name="Spiegler S."/>
            <person name="Tivey A."/>
            <person name="Sugano S."/>
            <person name="White B."/>
            <person name="Walker D."/>
            <person name="Woodward J.R."/>
            <person name="Winckler T."/>
            <person name="Tanaka Y."/>
            <person name="Shaulsky G."/>
            <person name="Schleicher M."/>
            <person name="Weinstock G.M."/>
            <person name="Rosenthal A."/>
            <person name="Cox E.C."/>
            <person name="Chisholm R.L."/>
            <person name="Gibbs R.A."/>
            <person name="Loomis W.F."/>
            <person name="Platzer M."/>
            <person name="Kay R.R."/>
            <person name="Williams J.G."/>
            <person name="Dear P.H."/>
            <person name="Noegel A.A."/>
            <person name="Barrell B.G."/>
            <person name="Kuspa A."/>
        </authorList>
    </citation>
    <scope>NUCLEOTIDE SEQUENCE [LARGE SCALE GENOMIC DNA]</scope>
    <source>
        <strain>AX4</strain>
    </source>
</reference>
<reference key="3">
    <citation type="journal article" date="2008" name="BMC Microbiol.">
        <title>Dictyostelium transcriptional responses to Pseudomonas aeruginosa: common and specific effects from PAO1 and PA14 strains.</title>
        <authorList>
            <person name="Carilla-Latorre S."/>
            <person name="Calvo-Garrido J."/>
            <person name="Bloomfield G."/>
            <person name="Skelton J."/>
            <person name="Kay R.R."/>
            <person name="Ivens A."/>
            <person name="Martinez J.L."/>
            <person name="Escalante R."/>
        </authorList>
    </citation>
    <scope>INDUCTION [LARGE SCALE ANALYSIS]</scope>
</reference>
<feature type="chain" id="PRO_0000393464" description="Fatty acid elongase A">
    <location>
        <begin position="1"/>
        <end position="271"/>
    </location>
</feature>
<feature type="transmembrane region" description="Helical" evidence="1">
    <location>
        <begin position="35"/>
        <end position="55"/>
    </location>
</feature>
<feature type="transmembrane region" description="Helical" evidence="1">
    <location>
        <begin position="68"/>
        <end position="88"/>
    </location>
</feature>
<feature type="transmembrane region" description="Helical" evidence="1">
    <location>
        <begin position="102"/>
        <end position="122"/>
    </location>
</feature>
<feature type="transmembrane region" description="Helical" evidence="1">
    <location>
        <begin position="139"/>
        <end position="159"/>
    </location>
</feature>
<feature type="transmembrane region" description="Helical" evidence="1">
    <location>
        <begin position="165"/>
        <end position="185"/>
    </location>
</feature>
<feature type="transmembrane region" description="Helical" evidence="1">
    <location>
        <begin position="198"/>
        <end position="220"/>
    </location>
</feature>
<feature type="transmembrane region" description="Helical" evidence="1">
    <location>
        <begin position="237"/>
        <end position="257"/>
    </location>
</feature>
<name>ELOA_DICDI</name>
<dbReference type="EC" id="2.3.1.199"/>
<dbReference type="EMBL" id="EU826171">
    <property type="protein sequence ID" value="ACJ09597.1"/>
    <property type="molecule type" value="mRNA"/>
</dbReference>
<dbReference type="EMBL" id="AAFI02000197">
    <property type="protein sequence ID" value="EAL60997.1"/>
    <property type="molecule type" value="Genomic_DNA"/>
</dbReference>
<dbReference type="RefSeq" id="XP_629422.1">
    <property type="nucleotide sequence ID" value="XM_629420.1"/>
</dbReference>
<dbReference type="SMR" id="Q54CJ4"/>
<dbReference type="FunCoup" id="Q54CJ4">
    <property type="interactions" value="118"/>
</dbReference>
<dbReference type="PaxDb" id="44689-DDB0252810"/>
<dbReference type="EnsemblProtists" id="EAL60997">
    <property type="protein sequence ID" value="EAL60997"/>
    <property type="gene ID" value="DDB_G0292896"/>
</dbReference>
<dbReference type="GeneID" id="8628941"/>
<dbReference type="KEGG" id="ddi:DDB_G0292896"/>
<dbReference type="dictyBase" id="DDB_G0292896">
    <property type="gene designation" value="eloA"/>
</dbReference>
<dbReference type="VEuPathDB" id="AmoebaDB:DDB_G0292896"/>
<dbReference type="eggNOG" id="KOG3071">
    <property type="taxonomic scope" value="Eukaryota"/>
</dbReference>
<dbReference type="HOGENOM" id="CLU_048483_6_1_1"/>
<dbReference type="InParanoid" id="Q54CJ4"/>
<dbReference type="OMA" id="CRFPMGW"/>
<dbReference type="PhylomeDB" id="Q54CJ4"/>
<dbReference type="BRENDA" id="2.3.1.199">
    <property type="organism ID" value="1939"/>
</dbReference>
<dbReference type="BRENDA" id="6.2.1.2">
    <property type="organism ID" value="1939"/>
</dbReference>
<dbReference type="Reactome" id="R-DDI-2046105">
    <property type="pathway name" value="Linoleic acid (LA) metabolism"/>
</dbReference>
<dbReference type="Reactome" id="R-DDI-2046106">
    <property type="pathway name" value="alpha-linolenic acid (ALA) metabolism"/>
</dbReference>
<dbReference type="Reactome" id="R-DDI-75876">
    <property type="pathway name" value="Synthesis of very long-chain fatty acyl-CoAs"/>
</dbReference>
<dbReference type="PRO" id="PR:Q54CJ4"/>
<dbReference type="Proteomes" id="UP000002195">
    <property type="component" value="Chromosome 6"/>
</dbReference>
<dbReference type="GO" id="GO:0005783">
    <property type="term" value="C:endoplasmic reticulum"/>
    <property type="evidence" value="ECO:0000250"/>
    <property type="project" value="dictyBase"/>
</dbReference>
<dbReference type="GO" id="GO:0005789">
    <property type="term" value="C:endoplasmic reticulum membrane"/>
    <property type="evidence" value="ECO:0000250"/>
    <property type="project" value="UniProtKB"/>
</dbReference>
<dbReference type="GO" id="GO:0009922">
    <property type="term" value="F:fatty acid elongase activity"/>
    <property type="evidence" value="ECO:0000314"/>
    <property type="project" value="dictyBase"/>
</dbReference>
<dbReference type="GO" id="GO:0034625">
    <property type="term" value="P:fatty acid elongation, monounsaturated fatty acid"/>
    <property type="evidence" value="ECO:0000314"/>
    <property type="project" value="dictyBase"/>
</dbReference>
<dbReference type="GO" id="GO:0034626">
    <property type="term" value="P:fatty acid elongation, polyunsaturated fatty acid"/>
    <property type="evidence" value="ECO:0000318"/>
    <property type="project" value="GO_Central"/>
</dbReference>
<dbReference type="GO" id="GO:0019367">
    <property type="term" value="P:fatty acid elongation, saturated fatty acid"/>
    <property type="evidence" value="ECO:0000318"/>
    <property type="project" value="GO_Central"/>
</dbReference>
<dbReference type="GO" id="GO:0030148">
    <property type="term" value="P:sphingolipid biosynthetic process"/>
    <property type="evidence" value="ECO:0000318"/>
    <property type="project" value="GO_Central"/>
</dbReference>
<dbReference type="GO" id="GO:0042761">
    <property type="term" value="P:very long-chain fatty acid biosynthetic process"/>
    <property type="evidence" value="ECO:0000318"/>
    <property type="project" value="GO_Central"/>
</dbReference>
<dbReference type="InterPro" id="IPR002076">
    <property type="entry name" value="ELO_fam"/>
</dbReference>
<dbReference type="PANTHER" id="PTHR11157:SF134">
    <property type="entry name" value="ELONGATION OF FATTY ACIDS PROTEIN 1-RELATED"/>
    <property type="match status" value="1"/>
</dbReference>
<dbReference type="PANTHER" id="PTHR11157">
    <property type="entry name" value="FATTY ACID ACYL TRANSFERASE-RELATED"/>
    <property type="match status" value="1"/>
</dbReference>
<dbReference type="Pfam" id="PF01151">
    <property type="entry name" value="ELO"/>
    <property type="match status" value="1"/>
</dbReference>